<proteinExistence type="inferred from homology"/>
<comment type="function">
    <text evidence="1">Quinone reductase that provides resistance to thiol-specific stress caused by electrophilic quinones.</text>
</comment>
<comment type="function">
    <text evidence="1">Also exhibits azoreductase activity. Catalyzes the reductive cleavage of the azo bond in aromatic azo compounds to the corresponding amines.</text>
</comment>
<comment type="catalytic activity">
    <reaction evidence="1">
        <text>2 a quinone + NADH + H(+) = 2 a 1,4-benzosemiquinone + NAD(+)</text>
        <dbReference type="Rhea" id="RHEA:65952"/>
        <dbReference type="ChEBI" id="CHEBI:15378"/>
        <dbReference type="ChEBI" id="CHEBI:57540"/>
        <dbReference type="ChEBI" id="CHEBI:57945"/>
        <dbReference type="ChEBI" id="CHEBI:132124"/>
        <dbReference type="ChEBI" id="CHEBI:134225"/>
    </reaction>
</comment>
<comment type="catalytic activity">
    <reaction evidence="1">
        <text>N,N-dimethyl-1,4-phenylenediamine + anthranilate + 2 NAD(+) = 2-(4-dimethylaminophenyl)diazenylbenzoate + 2 NADH + 2 H(+)</text>
        <dbReference type="Rhea" id="RHEA:55872"/>
        <dbReference type="ChEBI" id="CHEBI:15378"/>
        <dbReference type="ChEBI" id="CHEBI:15783"/>
        <dbReference type="ChEBI" id="CHEBI:16567"/>
        <dbReference type="ChEBI" id="CHEBI:57540"/>
        <dbReference type="ChEBI" id="CHEBI:57945"/>
        <dbReference type="ChEBI" id="CHEBI:71579"/>
        <dbReference type="EC" id="1.7.1.17"/>
    </reaction>
</comment>
<comment type="cofactor">
    <cofactor evidence="1">
        <name>FMN</name>
        <dbReference type="ChEBI" id="CHEBI:58210"/>
    </cofactor>
    <text evidence="1">Binds 1 FMN per subunit.</text>
</comment>
<comment type="subunit">
    <text evidence="1">Homodimer.</text>
</comment>
<comment type="similarity">
    <text evidence="1">Belongs to the azoreductase type 1 family.</text>
</comment>
<feature type="chain" id="PRO_0000166365" description="FMN-dependent NADH:quinone oxidoreductase 2">
    <location>
        <begin position="1"/>
        <end position="216"/>
    </location>
</feature>
<feature type="binding site" evidence="1">
    <location>
        <position position="9"/>
    </location>
    <ligand>
        <name>FMN</name>
        <dbReference type="ChEBI" id="CHEBI:58210"/>
    </ligand>
</feature>
<feature type="binding site" evidence="1">
    <location>
        <begin position="15"/>
        <end position="17"/>
    </location>
    <ligand>
        <name>FMN</name>
        <dbReference type="ChEBI" id="CHEBI:58210"/>
    </ligand>
</feature>
<feature type="binding site" evidence="1">
    <location>
        <begin position="96"/>
        <end position="99"/>
    </location>
    <ligand>
        <name>FMN</name>
        <dbReference type="ChEBI" id="CHEBI:58210"/>
    </ligand>
</feature>
<feature type="binding site" evidence="1">
    <location>
        <begin position="140"/>
        <end position="143"/>
    </location>
    <ligand>
        <name>FMN</name>
        <dbReference type="ChEBI" id="CHEBI:58210"/>
    </ligand>
</feature>
<evidence type="ECO:0000255" key="1">
    <source>
        <dbReference type="HAMAP-Rule" id="MF_01216"/>
    </source>
</evidence>
<name>AZOR2_XANAC</name>
<reference key="1">
    <citation type="journal article" date="2002" name="Nature">
        <title>Comparison of the genomes of two Xanthomonas pathogens with differing host specificities.</title>
        <authorList>
            <person name="da Silva A.C.R."/>
            <person name="Ferro J.A."/>
            <person name="Reinach F.C."/>
            <person name="Farah C.S."/>
            <person name="Furlan L.R."/>
            <person name="Quaggio R.B."/>
            <person name="Monteiro-Vitorello C.B."/>
            <person name="Van Sluys M.A."/>
            <person name="Almeida N.F. Jr."/>
            <person name="Alves L.M.C."/>
            <person name="do Amaral A.M."/>
            <person name="Bertolini M.C."/>
            <person name="Camargo L.E.A."/>
            <person name="Camarotte G."/>
            <person name="Cannavan F."/>
            <person name="Cardozo J."/>
            <person name="Chambergo F."/>
            <person name="Ciapina L.P."/>
            <person name="Cicarelli R.M.B."/>
            <person name="Coutinho L.L."/>
            <person name="Cursino-Santos J.R."/>
            <person name="El-Dorry H."/>
            <person name="Faria J.B."/>
            <person name="Ferreira A.J.S."/>
            <person name="Ferreira R.C.C."/>
            <person name="Ferro M.I.T."/>
            <person name="Formighieri E.F."/>
            <person name="Franco M.C."/>
            <person name="Greggio C.C."/>
            <person name="Gruber A."/>
            <person name="Katsuyama A.M."/>
            <person name="Kishi L.T."/>
            <person name="Leite R.P."/>
            <person name="Lemos E.G.M."/>
            <person name="Lemos M.V.F."/>
            <person name="Locali E.C."/>
            <person name="Machado M.A."/>
            <person name="Madeira A.M.B.N."/>
            <person name="Martinez-Rossi N.M."/>
            <person name="Martins E.C."/>
            <person name="Meidanis J."/>
            <person name="Menck C.F.M."/>
            <person name="Miyaki C.Y."/>
            <person name="Moon D.H."/>
            <person name="Moreira L.M."/>
            <person name="Novo M.T.M."/>
            <person name="Okura V.K."/>
            <person name="Oliveira M.C."/>
            <person name="Oliveira V.R."/>
            <person name="Pereira H.A."/>
            <person name="Rossi A."/>
            <person name="Sena J.A.D."/>
            <person name="Silva C."/>
            <person name="de Souza R.F."/>
            <person name="Spinola L.A.F."/>
            <person name="Takita M.A."/>
            <person name="Tamura R.E."/>
            <person name="Teixeira E.C."/>
            <person name="Tezza R.I.D."/>
            <person name="Trindade dos Santos M."/>
            <person name="Truffi D."/>
            <person name="Tsai S.M."/>
            <person name="White F.F."/>
            <person name="Setubal J.C."/>
            <person name="Kitajima J.P."/>
        </authorList>
    </citation>
    <scope>NUCLEOTIDE SEQUENCE [LARGE SCALE GENOMIC DNA]</scope>
    <source>
        <strain>306</strain>
    </source>
</reference>
<gene>
    <name evidence="1" type="primary">azoR2</name>
    <name type="ordered locus">XAC3773</name>
</gene>
<keyword id="KW-0285">Flavoprotein</keyword>
<keyword id="KW-0288">FMN</keyword>
<keyword id="KW-0520">NAD</keyword>
<keyword id="KW-0560">Oxidoreductase</keyword>
<accession>P58903</accession>
<organism>
    <name type="scientific">Xanthomonas axonopodis pv. citri (strain 306)</name>
    <dbReference type="NCBI Taxonomy" id="190486"/>
    <lineage>
        <taxon>Bacteria</taxon>
        <taxon>Pseudomonadati</taxon>
        <taxon>Pseudomonadota</taxon>
        <taxon>Gammaproteobacteria</taxon>
        <taxon>Lysobacterales</taxon>
        <taxon>Lysobacteraceae</taxon>
        <taxon>Xanthomonas</taxon>
    </lineage>
</organism>
<protein>
    <recommendedName>
        <fullName evidence="1">FMN-dependent NADH:quinone oxidoreductase 2</fullName>
        <ecNumber evidence="1">1.6.5.-</ecNumber>
    </recommendedName>
    <alternativeName>
        <fullName evidence="1">Azo-dye reductase 2</fullName>
    </alternativeName>
    <alternativeName>
        <fullName evidence="1">FMN-dependent NADH-azo compound oxidoreductase 2</fullName>
    </alternativeName>
    <alternativeName>
        <fullName evidence="1">FMN-dependent NADH-azoreductase 2</fullName>
        <ecNumber evidence="1">1.7.1.17</ecNumber>
    </alternativeName>
</protein>
<dbReference type="EC" id="1.6.5.-" evidence="1"/>
<dbReference type="EC" id="1.7.1.17" evidence="1"/>
<dbReference type="EMBL" id="AE008923">
    <property type="protein sequence ID" value="AAM38616.1"/>
    <property type="molecule type" value="Genomic_DNA"/>
</dbReference>
<dbReference type="RefSeq" id="WP_011052511.1">
    <property type="nucleotide sequence ID" value="NC_003919.1"/>
</dbReference>
<dbReference type="SMR" id="P58903"/>
<dbReference type="KEGG" id="xac:XAC3773"/>
<dbReference type="eggNOG" id="COG1182">
    <property type="taxonomic scope" value="Bacteria"/>
</dbReference>
<dbReference type="HOGENOM" id="CLU_088964_0_0_6"/>
<dbReference type="Proteomes" id="UP000000576">
    <property type="component" value="Chromosome"/>
</dbReference>
<dbReference type="GO" id="GO:0009055">
    <property type="term" value="F:electron transfer activity"/>
    <property type="evidence" value="ECO:0007669"/>
    <property type="project" value="UniProtKB-UniRule"/>
</dbReference>
<dbReference type="GO" id="GO:0010181">
    <property type="term" value="F:FMN binding"/>
    <property type="evidence" value="ECO:0007669"/>
    <property type="project" value="UniProtKB-UniRule"/>
</dbReference>
<dbReference type="GO" id="GO:0016652">
    <property type="term" value="F:oxidoreductase activity, acting on NAD(P)H as acceptor"/>
    <property type="evidence" value="ECO:0007669"/>
    <property type="project" value="UniProtKB-UniRule"/>
</dbReference>
<dbReference type="GO" id="GO:0016655">
    <property type="term" value="F:oxidoreductase activity, acting on NAD(P)H, quinone or similar compound as acceptor"/>
    <property type="evidence" value="ECO:0007669"/>
    <property type="project" value="InterPro"/>
</dbReference>
<dbReference type="Gene3D" id="3.40.50.360">
    <property type="match status" value="1"/>
</dbReference>
<dbReference type="HAMAP" id="MF_01216">
    <property type="entry name" value="Azoreductase_type1"/>
    <property type="match status" value="1"/>
</dbReference>
<dbReference type="InterPro" id="IPR003680">
    <property type="entry name" value="Flavodoxin_fold"/>
</dbReference>
<dbReference type="InterPro" id="IPR029039">
    <property type="entry name" value="Flavoprotein-like_sf"/>
</dbReference>
<dbReference type="InterPro" id="IPR050104">
    <property type="entry name" value="FMN-dep_NADH:Q_OxRdtase_AzoR1"/>
</dbReference>
<dbReference type="InterPro" id="IPR023048">
    <property type="entry name" value="NADH:quinone_OxRdtase_FMN_depd"/>
</dbReference>
<dbReference type="PANTHER" id="PTHR43741">
    <property type="entry name" value="FMN-DEPENDENT NADH-AZOREDUCTASE 1"/>
    <property type="match status" value="1"/>
</dbReference>
<dbReference type="PANTHER" id="PTHR43741:SF4">
    <property type="entry name" value="FMN-DEPENDENT NADH:QUINONE OXIDOREDUCTASE"/>
    <property type="match status" value="1"/>
</dbReference>
<dbReference type="Pfam" id="PF02525">
    <property type="entry name" value="Flavodoxin_2"/>
    <property type="match status" value="1"/>
</dbReference>
<dbReference type="SUPFAM" id="SSF52218">
    <property type="entry name" value="Flavoproteins"/>
    <property type="match status" value="1"/>
</dbReference>
<sequence>MRLLHLDSSILTDTSVSRRLTAQVVQDLHAAIDDLHATYRDLAAAPIAHLSGAIAAGFRPLPQPDSDAASVAEHALSEQLVDEFLASDIVVIGAPMYNFSVPTQLKAWIDRIAQPGRTFRYTANGPEGLAGGKQLIVASSRGGMYAQGPMASLDFQEAYLTATFGFLGVRDVYFVRAENQSRGPGPAAAALISAQASIADVVRSVARGVVHTRVEA</sequence>